<evidence type="ECO:0000250" key="1"/>
<evidence type="ECO:0000250" key="2">
    <source>
        <dbReference type="UniProtKB" id="Q8IWF2"/>
    </source>
</evidence>
<evidence type="ECO:0000255" key="3"/>
<evidence type="ECO:0000255" key="4">
    <source>
        <dbReference type="PROSITE-ProRule" id="PRU10138"/>
    </source>
</evidence>
<evidence type="ECO:0000256" key="5">
    <source>
        <dbReference type="SAM" id="MobiDB-lite"/>
    </source>
</evidence>
<evidence type="ECO:0000305" key="6"/>
<evidence type="ECO:0000312" key="7">
    <source>
        <dbReference type="MGI" id="MGI:106315"/>
    </source>
</evidence>
<sequence length="665" mass="76004">MGPSGLLVALALHLAVCSRPHRDYCVLGAGPAGLQMAAFLHRAGRDYEVFERESAPGSFFTRYPRHRKLISINKRHTGKANAEFNLRHDWNSLLSDDPHLLFRHYSQAYFPDASDMVRYLGDFARRLGLHVLYNTNITHVTLDKDPQAWNGHYFILTDQKGQVYQCSVLLVATGLAVPKLVDFPGSEYVEGYESVSVDPEDFVGQNVLILGHGNSAFETAENILGVTNFVHMLSRSRVRLSWATHYVGDVRAINNGLLDTYQLKSLDGLLESDLEYLALVKDSKGKFHVTLKFLLENNSSQSADSIPLPEDDNDNFAMRVAYDRVIRCLGWTFDFSIFDQSLRLSSGTEFSKKYPLIKASYESKGSRGLFILGTASHSVDYRKSAGGFIHGFRYTVRAVHRLLEHRHHGIPWPSTEYPITQLTSSIIRRVNEASGLYQMFSVLADIILLKENATAFEYLEEFPMQMLAQLEMLTGRTARHGLFVINMEYGKNFSGPEKDVFYYDRSVAHIEDAWMSNFLHPVIYYYRHLPTEQDMRFRPAQWPLPRPTAIHHIVEDFLTDWTAPVGHILPLRRFLENCLDTDLRSFYAESCFLFTLTRQRLPPFCQQGYLRMQGLSSTKSLWQHGVESRLLQDYTAMENSNRWLGDHSTAPEPLTQSLDSNKEEL</sequence>
<proteinExistence type="evidence at transcript level"/>
<comment type="function">
    <text evidence="1">Probable flavoprotein which may function in endoplasmic reticulum associated degradation (ERAD). May bind non-native proteins in the endoplasmic reticulum and target them to the ubiquitination machinery for subsequent degradation (By similarity).</text>
</comment>
<comment type="cofactor">
    <cofactor evidence="1">
        <name>FAD</name>
        <dbReference type="ChEBI" id="CHEBI:57692"/>
    </cofactor>
</comment>
<comment type="subunit">
    <text evidence="2">Interacts with SEL1L. May interact with OS9 and DNAJC10. Interacts with TXNDC16.</text>
</comment>
<comment type="subcellular location">
    <subcellularLocation>
        <location evidence="4">Endoplasmic reticulum lumen</location>
    </subcellularLocation>
</comment>
<comment type="PTM">
    <text evidence="1">N-glycosylated.</text>
</comment>
<comment type="similarity">
    <text evidence="6">Belongs to the FOXRED2 family.</text>
</comment>
<comment type="sequence caution" evidence="6">
    <conflict type="frameshift">
        <sequence resource="EMBL-CDS" id="BAE42033"/>
    </conflict>
</comment>
<reference key="1">
    <citation type="journal article" date="2005" name="Science">
        <title>The transcriptional landscape of the mammalian genome.</title>
        <authorList>
            <person name="Carninci P."/>
            <person name="Kasukawa T."/>
            <person name="Katayama S."/>
            <person name="Gough J."/>
            <person name="Frith M.C."/>
            <person name="Maeda N."/>
            <person name="Oyama R."/>
            <person name="Ravasi T."/>
            <person name="Lenhard B."/>
            <person name="Wells C."/>
            <person name="Kodzius R."/>
            <person name="Shimokawa K."/>
            <person name="Bajic V.B."/>
            <person name="Brenner S.E."/>
            <person name="Batalov S."/>
            <person name="Forrest A.R."/>
            <person name="Zavolan M."/>
            <person name="Davis M.J."/>
            <person name="Wilming L.G."/>
            <person name="Aidinis V."/>
            <person name="Allen J.E."/>
            <person name="Ambesi-Impiombato A."/>
            <person name="Apweiler R."/>
            <person name="Aturaliya R.N."/>
            <person name="Bailey T.L."/>
            <person name="Bansal M."/>
            <person name="Baxter L."/>
            <person name="Beisel K.W."/>
            <person name="Bersano T."/>
            <person name="Bono H."/>
            <person name="Chalk A.M."/>
            <person name="Chiu K.P."/>
            <person name="Choudhary V."/>
            <person name="Christoffels A."/>
            <person name="Clutterbuck D.R."/>
            <person name="Crowe M.L."/>
            <person name="Dalla E."/>
            <person name="Dalrymple B.P."/>
            <person name="de Bono B."/>
            <person name="Della Gatta G."/>
            <person name="di Bernardo D."/>
            <person name="Down T."/>
            <person name="Engstrom P."/>
            <person name="Fagiolini M."/>
            <person name="Faulkner G."/>
            <person name="Fletcher C.F."/>
            <person name="Fukushima T."/>
            <person name="Furuno M."/>
            <person name="Futaki S."/>
            <person name="Gariboldi M."/>
            <person name="Georgii-Hemming P."/>
            <person name="Gingeras T.R."/>
            <person name="Gojobori T."/>
            <person name="Green R.E."/>
            <person name="Gustincich S."/>
            <person name="Harbers M."/>
            <person name="Hayashi Y."/>
            <person name="Hensch T.K."/>
            <person name="Hirokawa N."/>
            <person name="Hill D."/>
            <person name="Huminiecki L."/>
            <person name="Iacono M."/>
            <person name="Ikeo K."/>
            <person name="Iwama A."/>
            <person name="Ishikawa T."/>
            <person name="Jakt M."/>
            <person name="Kanapin A."/>
            <person name="Katoh M."/>
            <person name="Kawasawa Y."/>
            <person name="Kelso J."/>
            <person name="Kitamura H."/>
            <person name="Kitano H."/>
            <person name="Kollias G."/>
            <person name="Krishnan S.P."/>
            <person name="Kruger A."/>
            <person name="Kummerfeld S.K."/>
            <person name="Kurochkin I.V."/>
            <person name="Lareau L.F."/>
            <person name="Lazarevic D."/>
            <person name="Lipovich L."/>
            <person name="Liu J."/>
            <person name="Liuni S."/>
            <person name="McWilliam S."/>
            <person name="Madan Babu M."/>
            <person name="Madera M."/>
            <person name="Marchionni L."/>
            <person name="Matsuda H."/>
            <person name="Matsuzawa S."/>
            <person name="Miki H."/>
            <person name="Mignone F."/>
            <person name="Miyake S."/>
            <person name="Morris K."/>
            <person name="Mottagui-Tabar S."/>
            <person name="Mulder N."/>
            <person name="Nakano N."/>
            <person name="Nakauchi H."/>
            <person name="Ng P."/>
            <person name="Nilsson R."/>
            <person name="Nishiguchi S."/>
            <person name="Nishikawa S."/>
            <person name="Nori F."/>
            <person name="Ohara O."/>
            <person name="Okazaki Y."/>
            <person name="Orlando V."/>
            <person name="Pang K.C."/>
            <person name="Pavan W.J."/>
            <person name="Pavesi G."/>
            <person name="Pesole G."/>
            <person name="Petrovsky N."/>
            <person name="Piazza S."/>
            <person name="Reed J."/>
            <person name="Reid J.F."/>
            <person name="Ring B.Z."/>
            <person name="Ringwald M."/>
            <person name="Rost B."/>
            <person name="Ruan Y."/>
            <person name="Salzberg S.L."/>
            <person name="Sandelin A."/>
            <person name="Schneider C."/>
            <person name="Schoenbach C."/>
            <person name="Sekiguchi K."/>
            <person name="Semple C.A."/>
            <person name="Seno S."/>
            <person name="Sessa L."/>
            <person name="Sheng Y."/>
            <person name="Shibata Y."/>
            <person name="Shimada H."/>
            <person name="Shimada K."/>
            <person name="Silva D."/>
            <person name="Sinclair B."/>
            <person name="Sperling S."/>
            <person name="Stupka E."/>
            <person name="Sugiura K."/>
            <person name="Sultana R."/>
            <person name="Takenaka Y."/>
            <person name="Taki K."/>
            <person name="Tammoja K."/>
            <person name="Tan S.L."/>
            <person name="Tang S."/>
            <person name="Taylor M.S."/>
            <person name="Tegner J."/>
            <person name="Teichmann S.A."/>
            <person name="Ueda H.R."/>
            <person name="van Nimwegen E."/>
            <person name="Verardo R."/>
            <person name="Wei C.L."/>
            <person name="Yagi K."/>
            <person name="Yamanishi H."/>
            <person name="Zabarovsky E."/>
            <person name="Zhu S."/>
            <person name="Zimmer A."/>
            <person name="Hide W."/>
            <person name="Bult C."/>
            <person name="Grimmond S.M."/>
            <person name="Teasdale R.D."/>
            <person name="Liu E.T."/>
            <person name="Brusic V."/>
            <person name="Quackenbush J."/>
            <person name="Wahlestedt C."/>
            <person name="Mattick J.S."/>
            <person name="Hume D.A."/>
            <person name="Kai C."/>
            <person name="Sasaki D."/>
            <person name="Tomaru Y."/>
            <person name="Fukuda S."/>
            <person name="Kanamori-Katayama M."/>
            <person name="Suzuki M."/>
            <person name="Aoki J."/>
            <person name="Arakawa T."/>
            <person name="Iida J."/>
            <person name="Imamura K."/>
            <person name="Itoh M."/>
            <person name="Kato T."/>
            <person name="Kawaji H."/>
            <person name="Kawagashira N."/>
            <person name="Kawashima T."/>
            <person name="Kojima M."/>
            <person name="Kondo S."/>
            <person name="Konno H."/>
            <person name="Nakano K."/>
            <person name="Ninomiya N."/>
            <person name="Nishio T."/>
            <person name="Okada M."/>
            <person name="Plessy C."/>
            <person name="Shibata K."/>
            <person name="Shiraki T."/>
            <person name="Suzuki S."/>
            <person name="Tagami M."/>
            <person name="Waki K."/>
            <person name="Watahiki A."/>
            <person name="Okamura-Oho Y."/>
            <person name="Suzuki H."/>
            <person name="Kawai J."/>
            <person name="Hayashizaki Y."/>
        </authorList>
    </citation>
    <scope>NUCLEOTIDE SEQUENCE [LARGE SCALE MRNA]</scope>
    <source>
        <strain>C57BL/6J</strain>
        <strain>NOD</strain>
        <tissue>Corpora quadrigemina</tissue>
    </source>
</reference>
<reference key="2">
    <citation type="journal article" date="2009" name="PLoS Biol.">
        <title>Lineage-specific biology revealed by a finished genome assembly of the mouse.</title>
        <authorList>
            <person name="Church D.M."/>
            <person name="Goodstadt L."/>
            <person name="Hillier L.W."/>
            <person name="Zody M.C."/>
            <person name="Goldstein S."/>
            <person name="She X."/>
            <person name="Bult C.J."/>
            <person name="Agarwala R."/>
            <person name="Cherry J.L."/>
            <person name="DiCuccio M."/>
            <person name="Hlavina W."/>
            <person name="Kapustin Y."/>
            <person name="Meric P."/>
            <person name="Maglott D."/>
            <person name="Birtle Z."/>
            <person name="Marques A.C."/>
            <person name="Graves T."/>
            <person name="Zhou S."/>
            <person name="Teague B."/>
            <person name="Potamousis K."/>
            <person name="Churas C."/>
            <person name="Place M."/>
            <person name="Herschleb J."/>
            <person name="Runnheim R."/>
            <person name="Forrest D."/>
            <person name="Amos-Landgraf J."/>
            <person name="Schwartz D.C."/>
            <person name="Cheng Z."/>
            <person name="Lindblad-Toh K."/>
            <person name="Eichler E.E."/>
            <person name="Ponting C.P."/>
        </authorList>
    </citation>
    <scope>NUCLEOTIDE SEQUENCE [LARGE SCALE GENOMIC DNA]</scope>
    <source>
        <strain>C57BL/6J</strain>
    </source>
</reference>
<reference key="3">
    <citation type="journal article" date="2004" name="Genome Res.">
        <title>The status, quality, and expansion of the NIH full-length cDNA project: the Mammalian Gene Collection (MGC).</title>
        <authorList>
            <consortium name="The MGC Project Team"/>
        </authorList>
    </citation>
    <scope>NUCLEOTIDE SEQUENCE [LARGE SCALE MRNA]</scope>
    <source>
        <strain>C57BL/6J</strain>
        <tissue>Eye</tissue>
    </source>
</reference>
<feature type="signal peptide" evidence="3">
    <location>
        <begin position="1"/>
        <end position="17"/>
    </location>
</feature>
<feature type="chain" id="PRO_0000337693" description="FAD-dependent oxidoreductase domain-containing protein 2">
    <location>
        <begin position="18"/>
        <end position="665"/>
    </location>
</feature>
<feature type="region of interest" description="Disordered" evidence="5">
    <location>
        <begin position="642"/>
        <end position="665"/>
    </location>
</feature>
<feature type="short sequence motif" description="Prevents secretion from ER" evidence="4">
    <location>
        <begin position="662"/>
        <end position="665"/>
    </location>
</feature>
<feature type="glycosylation site" description="N-linked (GlcNAc...) asparagine" evidence="3">
    <location>
        <position position="136"/>
    </location>
</feature>
<feature type="sequence conflict" description="In Ref. 1; BAE42033." evidence="6" ref="1">
    <original>N</original>
    <variation>S</variation>
    <location>
        <position position="298"/>
    </location>
</feature>
<feature type="sequence conflict" description="In Ref. 3; AAH86662." evidence="6" ref="3">
    <original>L</original>
    <variation>P</variation>
    <location>
        <position position="329"/>
    </location>
</feature>
<dbReference type="EMBL" id="AK140027">
    <property type="protein sequence ID" value="BAE24215.1"/>
    <property type="molecule type" value="mRNA"/>
</dbReference>
<dbReference type="EMBL" id="AK170795">
    <property type="protein sequence ID" value="BAE42033.1"/>
    <property type="status" value="ALT_FRAME"/>
    <property type="molecule type" value="mRNA"/>
</dbReference>
<dbReference type="EMBL" id="AL589650">
    <property type="status" value="NOT_ANNOTATED_CDS"/>
    <property type="molecule type" value="Genomic_DNA"/>
</dbReference>
<dbReference type="EMBL" id="BC086662">
    <property type="protein sequence ID" value="AAH86662.1"/>
    <property type="molecule type" value="mRNA"/>
</dbReference>
<dbReference type="CCDS" id="CCDS27607.1"/>
<dbReference type="RefSeq" id="NP_001017983.2">
    <property type="nucleotide sequence ID" value="NM_001017983.3"/>
</dbReference>
<dbReference type="RefSeq" id="NP_001161732.1">
    <property type="nucleotide sequence ID" value="NM_001168260.2"/>
</dbReference>
<dbReference type="SMR" id="Q3USW5"/>
<dbReference type="BioGRID" id="232097">
    <property type="interactions" value="2"/>
</dbReference>
<dbReference type="FunCoup" id="Q3USW5">
    <property type="interactions" value="511"/>
</dbReference>
<dbReference type="STRING" id="10090.ENSMUSP00000016696"/>
<dbReference type="GlyCosmos" id="Q3USW5">
    <property type="glycosylation" value="1 site, No reported glycans"/>
</dbReference>
<dbReference type="GlyGen" id="Q3USW5">
    <property type="glycosylation" value="4 sites, 3 N-linked glycans (4 sites)"/>
</dbReference>
<dbReference type="PhosphoSitePlus" id="Q3USW5"/>
<dbReference type="PaxDb" id="10090-ENSMUSP00000016696"/>
<dbReference type="PeptideAtlas" id="Q3USW5"/>
<dbReference type="ProteomicsDB" id="273394"/>
<dbReference type="Antibodypedia" id="25683">
    <property type="antibodies" value="93 antibodies from 22 providers"/>
</dbReference>
<dbReference type="DNASU" id="239554"/>
<dbReference type="Ensembl" id="ENSMUST00000016696.13">
    <property type="protein sequence ID" value="ENSMUSP00000016696.7"/>
    <property type="gene ID" value="ENSMUSG00000016552.14"/>
</dbReference>
<dbReference type="Ensembl" id="ENSMUST00000117725.2">
    <property type="protein sequence ID" value="ENSMUSP00000113403.2"/>
    <property type="gene ID" value="ENSMUSG00000016552.14"/>
</dbReference>
<dbReference type="GeneID" id="239554"/>
<dbReference type="KEGG" id="mmu:239554"/>
<dbReference type="UCSC" id="uc007woj.2">
    <property type="organism name" value="mouse"/>
</dbReference>
<dbReference type="AGR" id="MGI:106315"/>
<dbReference type="CTD" id="80020"/>
<dbReference type="MGI" id="MGI:106315">
    <property type="gene designation" value="Foxred2"/>
</dbReference>
<dbReference type="VEuPathDB" id="HostDB:ENSMUSG00000016552"/>
<dbReference type="eggNOG" id="KOG1399">
    <property type="taxonomic scope" value="Eukaryota"/>
</dbReference>
<dbReference type="GeneTree" id="ENSGT00640000091519"/>
<dbReference type="HOGENOM" id="CLU_014290_1_0_1"/>
<dbReference type="InParanoid" id="Q3USW5"/>
<dbReference type="OMA" id="KGQAYQC"/>
<dbReference type="OrthoDB" id="66881at2759"/>
<dbReference type="PhylomeDB" id="Q3USW5"/>
<dbReference type="TreeFam" id="TF324712"/>
<dbReference type="BioGRID-ORCS" id="239554">
    <property type="hits" value="2 hits in 78 CRISPR screens"/>
</dbReference>
<dbReference type="ChiTaRS" id="Foxred2">
    <property type="organism name" value="mouse"/>
</dbReference>
<dbReference type="PRO" id="PR:Q3USW5"/>
<dbReference type="Proteomes" id="UP000000589">
    <property type="component" value="Chromosome 15"/>
</dbReference>
<dbReference type="RNAct" id="Q3USW5">
    <property type="molecule type" value="protein"/>
</dbReference>
<dbReference type="Bgee" id="ENSMUSG00000016552">
    <property type="expression patterns" value="Expressed in secondary oocyte and 201 other cell types or tissues"/>
</dbReference>
<dbReference type="GO" id="GO:0005788">
    <property type="term" value="C:endoplasmic reticulum lumen"/>
    <property type="evidence" value="ECO:0000250"/>
    <property type="project" value="UniProtKB"/>
</dbReference>
<dbReference type="GO" id="GO:0050660">
    <property type="term" value="F:flavin adenine dinucleotide binding"/>
    <property type="evidence" value="ECO:0000250"/>
    <property type="project" value="UniProtKB"/>
</dbReference>
<dbReference type="GO" id="GO:0016491">
    <property type="term" value="F:oxidoreductase activity"/>
    <property type="evidence" value="ECO:0007669"/>
    <property type="project" value="UniProtKB-KW"/>
</dbReference>
<dbReference type="GO" id="GO:0036503">
    <property type="term" value="P:ERAD pathway"/>
    <property type="evidence" value="ECO:0000250"/>
    <property type="project" value="UniProtKB"/>
</dbReference>
<dbReference type="FunFam" id="3.50.50.60:FF:000143">
    <property type="entry name" value="FAD-dependent oxidoreductase domain-containing protein 2"/>
    <property type="match status" value="1"/>
</dbReference>
<dbReference type="Gene3D" id="3.50.50.60">
    <property type="entry name" value="FAD/NAD(P)-binding domain"/>
    <property type="match status" value="2"/>
</dbReference>
<dbReference type="InterPro" id="IPR050982">
    <property type="entry name" value="Auxin_biosynth/cation_transpt"/>
</dbReference>
<dbReference type="InterPro" id="IPR036188">
    <property type="entry name" value="FAD/NAD-bd_sf"/>
</dbReference>
<dbReference type="PANTHER" id="PTHR43539:SF23">
    <property type="entry name" value="FAD-DEPENDENT OXIDOREDUCTASE DOMAIN-CONTAINING PROTEIN 2"/>
    <property type="match status" value="1"/>
</dbReference>
<dbReference type="PANTHER" id="PTHR43539">
    <property type="entry name" value="FLAVIN-BINDING MONOOXYGENASE-LIKE PROTEIN (AFU_ORTHOLOGUE AFUA_4G09220)"/>
    <property type="match status" value="1"/>
</dbReference>
<dbReference type="Pfam" id="PF13738">
    <property type="entry name" value="Pyr_redox_3"/>
    <property type="match status" value="1"/>
</dbReference>
<dbReference type="SUPFAM" id="SSF51905">
    <property type="entry name" value="FAD/NAD(P)-binding domain"/>
    <property type="match status" value="1"/>
</dbReference>
<dbReference type="PROSITE" id="PS00014">
    <property type="entry name" value="ER_TARGET"/>
    <property type="match status" value="1"/>
</dbReference>
<name>FXRD2_MOUSE</name>
<accession>Q3USW5</accession>
<accession>Q3TCC4</accession>
<accession>Q5RJH0</accession>
<keyword id="KW-0256">Endoplasmic reticulum</keyword>
<keyword id="KW-0274">FAD</keyword>
<keyword id="KW-0285">Flavoprotein</keyword>
<keyword id="KW-0325">Glycoprotein</keyword>
<keyword id="KW-0560">Oxidoreductase</keyword>
<keyword id="KW-1185">Reference proteome</keyword>
<keyword id="KW-0732">Signal</keyword>
<protein>
    <recommendedName>
        <fullName>FAD-dependent oxidoreductase domain-containing protein 2</fullName>
    </recommendedName>
</protein>
<gene>
    <name evidence="7" type="primary">Foxred2</name>
    <name type="synonym">D15Bwg0759e</name>
</gene>
<organism>
    <name type="scientific">Mus musculus</name>
    <name type="common">Mouse</name>
    <dbReference type="NCBI Taxonomy" id="10090"/>
    <lineage>
        <taxon>Eukaryota</taxon>
        <taxon>Metazoa</taxon>
        <taxon>Chordata</taxon>
        <taxon>Craniata</taxon>
        <taxon>Vertebrata</taxon>
        <taxon>Euteleostomi</taxon>
        <taxon>Mammalia</taxon>
        <taxon>Eutheria</taxon>
        <taxon>Euarchontoglires</taxon>
        <taxon>Glires</taxon>
        <taxon>Rodentia</taxon>
        <taxon>Myomorpha</taxon>
        <taxon>Muroidea</taxon>
        <taxon>Muridae</taxon>
        <taxon>Murinae</taxon>
        <taxon>Mus</taxon>
        <taxon>Mus</taxon>
    </lineage>
</organism>